<proteinExistence type="evidence at protein level"/>
<protein>
    <recommendedName>
        <fullName evidence="13">Cholesterol side-chain cleavage enzyme, mitochondrial</fullName>
        <ecNumber evidence="10">1.14.15.6</ecNumber>
    </recommendedName>
    <alternativeName>
        <fullName>CYPXIA1</fullName>
    </alternativeName>
    <alternativeName>
        <fullName>Cholesterol desmolase</fullName>
    </alternativeName>
    <alternativeName>
        <fullName>Cytochrome P450 11A1</fullName>
    </alternativeName>
    <alternativeName>
        <fullName>Cytochrome P450(scc)</fullName>
    </alternativeName>
</protein>
<comment type="function">
    <text evidence="10">A cytochrome P450 monooxygenase that catalyzes the side-chain hydroxylation and cleavage of cholesterol to pregnenolone, the precursor of most steroid hormones (PubMed:21636783). Catalyzes three sequential oxidation reactions of cholesterol, namely the hydroxylation at C22 followed with the hydroxylation at C20 to yield 20R,22R-hydroxycholesterol that is further cleaved between C20 and C22 to yield the C21-steroid pregnenolone and 4-methylpentanal (PubMed:21636783). Mechanistically, uses molecular oxygen inserting one oxygen atom into a substrate and reducing the second into a water molecule. Two electrons are provided by NADPH via a two-protein mitochondrial transfer system comprising flavoprotein FDXR (adrenodoxin/ferredoxin reductase) and nonheme iron-sulfur protein FDX1 or FDX2 (adrenodoxin/ferredoxin) (PubMed:21636783).</text>
</comment>
<comment type="catalytic activity">
    <reaction evidence="10">
        <text>6 reduced [adrenodoxin] + cholesterol + 3 O2 + 6 H(+) = 4-methylpentanal + pregnenolone + 6 oxidized [adrenodoxin] + 4 H2O</text>
        <dbReference type="Rhea" id="RHEA:35739"/>
        <dbReference type="Rhea" id="RHEA-COMP:9998"/>
        <dbReference type="Rhea" id="RHEA-COMP:9999"/>
        <dbReference type="ChEBI" id="CHEBI:15377"/>
        <dbReference type="ChEBI" id="CHEBI:15378"/>
        <dbReference type="ChEBI" id="CHEBI:15379"/>
        <dbReference type="ChEBI" id="CHEBI:16113"/>
        <dbReference type="ChEBI" id="CHEBI:16581"/>
        <dbReference type="ChEBI" id="CHEBI:17998"/>
        <dbReference type="ChEBI" id="CHEBI:33737"/>
        <dbReference type="ChEBI" id="CHEBI:33738"/>
        <dbReference type="EC" id="1.14.15.6"/>
    </reaction>
    <physiologicalReaction direction="left-to-right" evidence="15">
        <dbReference type="Rhea" id="RHEA:35740"/>
    </physiologicalReaction>
</comment>
<comment type="catalytic activity">
    <reaction evidence="10">
        <text>2 reduced [adrenodoxin] + cholesterol + O2 + 2 H(+) = (22R)-hydroxycholesterol + 2 oxidized [adrenodoxin] + H2O</text>
        <dbReference type="Rhea" id="RHEA:34335"/>
        <dbReference type="Rhea" id="RHEA-COMP:9998"/>
        <dbReference type="Rhea" id="RHEA-COMP:9999"/>
        <dbReference type="ChEBI" id="CHEBI:15377"/>
        <dbReference type="ChEBI" id="CHEBI:15378"/>
        <dbReference type="ChEBI" id="CHEBI:15379"/>
        <dbReference type="ChEBI" id="CHEBI:16113"/>
        <dbReference type="ChEBI" id="CHEBI:33737"/>
        <dbReference type="ChEBI" id="CHEBI:33738"/>
        <dbReference type="ChEBI" id="CHEBI:67237"/>
    </reaction>
    <physiologicalReaction direction="left-to-right" evidence="15">
        <dbReference type="Rhea" id="RHEA:34336"/>
    </physiologicalReaction>
</comment>
<comment type="catalytic activity">
    <reaction evidence="10">
        <text>(22R)-hydroxycholesterol + 2 reduced [adrenodoxin] + O2 + 2 H(+) = (20R,22R)-20,22-dihydroxycholesterol + 2 oxidized [adrenodoxin] + H2O</text>
        <dbReference type="Rhea" id="RHEA:34339"/>
        <dbReference type="Rhea" id="RHEA-COMP:9998"/>
        <dbReference type="Rhea" id="RHEA-COMP:9999"/>
        <dbReference type="ChEBI" id="CHEBI:1294"/>
        <dbReference type="ChEBI" id="CHEBI:15377"/>
        <dbReference type="ChEBI" id="CHEBI:15378"/>
        <dbReference type="ChEBI" id="CHEBI:15379"/>
        <dbReference type="ChEBI" id="CHEBI:33737"/>
        <dbReference type="ChEBI" id="CHEBI:33738"/>
        <dbReference type="ChEBI" id="CHEBI:67237"/>
    </reaction>
    <physiologicalReaction direction="left-to-right" evidence="15">
        <dbReference type="Rhea" id="RHEA:34340"/>
    </physiologicalReaction>
</comment>
<comment type="catalytic activity">
    <reaction evidence="10">
        <text>(20R,22R)-20,22-dihydroxycholesterol + 2 reduced [adrenodoxin] + O2 + 2 H(+) = 4-methylpentanal + pregnenolone + 2 oxidized [adrenodoxin] + 2 H2O</text>
        <dbReference type="Rhea" id="RHEA:34343"/>
        <dbReference type="Rhea" id="RHEA-COMP:9998"/>
        <dbReference type="Rhea" id="RHEA-COMP:9999"/>
        <dbReference type="ChEBI" id="CHEBI:1294"/>
        <dbReference type="ChEBI" id="CHEBI:15377"/>
        <dbReference type="ChEBI" id="CHEBI:15378"/>
        <dbReference type="ChEBI" id="CHEBI:15379"/>
        <dbReference type="ChEBI" id="CHEBI:16581"/>
        <dbReference type="ChEBI" id="CHEBI:17998"/>
        <dbReference type="ChEBI" id="CHEBI:33737"/>
        <dbReference type="ChEBI" id="CHEBI:33738"/>
    </reaction>
    <physiologicalReaction direction="left-to-right" evidence="15">
        <dbReference type="Rhea" id="RHEA:34344"/>
    </physiologicalReaction>
</comment>
<comment type="cofactor">
    <cofactor evidence="10">
        <name>heme</name>
        <dbReference type="ChEBI" id="CHEBI:30413"/>
    </cofactor>
</comment>
<comment type="pathway">
    <text evidence="10">Lipid metabolism; C21-steroid hormone metabolism.</text>
</comment>
<comment type="pathway">
    <text evidence="10">Steroid metabolism; cholesterol metabolism.</text>
</comment>
<comment type="subunit">
    <text evidence="10">Interacts with FDX1/adrenodoxin.</text>
</comment>
<comment type="interaction">
    <interactant intactId="EBI-7183136">
        <id>P05108</id>
    </interactant>
    <interactant intactId="EBI-16423037">
        <id>Q9NZ94-2</id>
        <label>NLGN3</label>
    </interactant>
    <organismsDiffer>false</organismsDiffer>
    <experiments>3</experiments>
</comment>
<comment type="subcellular location">
    <subcellularLocation>
        <location evidence="2">Mitochondrion inner membrane</location>
        <topology evidence="14">Peripheral membrane protein</topology>
    </subcellularLocation>
    <text evidence="2">Localizes to the matrix side of the mitochondrion inner membrane.</text>
</comment>
<comment type="alternative products">
    <event type="alternative splicing"/>
    <isoform>
        <id>P05108-1</id>
        <name>1</name>
        <sequence type="displayed"/>
    </isoform>
    <isoform>
        <id>P05108-2</id>
        <name>2</name>
        <sequence type="described" ref="VSP_045695"/>
    </isoform>
</comment>
<comment type="induction">
    <text evidence="8">By 8-bromo cyclic AMP.</text>
</comment>
<comment type="disease" evidence="4 5 6 7 9">
    <disease id="DI-03022">
        <name>Adrenal insufficiency, congenital, with 46,XY sex reversal</name>
        <acronym>AICSR</acronym>
        <description>A rare disorder that can present as acute adrenal insufficiency in infancy or childhood. ACTH and plasma renin activity are elevated and adrenal steroids are inappropriately low or absent; the 46,XY patients have female external genitalia, sometimes with clitoromegaly. The phenotypic spectrum ranges from prematurity, complete underandrogenization, and severe early-onset adrenal failure to term birth with clitoromegaly and later-onset adrenal failure. Patients with congenital adrenal insufficiency do not manifest the massive adrenal enlargement typical of congenital lipoid adrenal hyperplasia.</description>
        <dbReference type="MIM" id="613743"/>
    </disease>
    <text>The disease is caused by variants affecting the gene represented in this entry.</text>
</comment>
<comment type="similarity">
    <text evidence="14">Belongs to the cytochrome P450 family.</text>
</comment>
<organism>
    <name type="scientific">Homo sapiens</name>
    <name type="common">Human</name>
    <dbReference type="NCBI Taxonomy" id="9606"/>
    <lineage>
        <taxon>Eukaryota</taxon>
        <taxon>Metazoa</taxon>
        <taxon>Chordata</taxon>
        <taxon>Craniata</taxon>
        <taxon>Vertebrata</taxon>
        <taxon>Euteleostomi</taxon>
        <taxon>Mammalia</taxon>
        <taxon>Eutheria</taxon>
        <taxon>Euarchontoglires</taxon>
        <taxon>Primates</taxon>
        <taxon>Haplorrhini</taxon>
        <taxon>Catarrhini</taxon>
        <taxon>Hominidae</taxon>
        <taxon>Homo</taxon>
    </lineage>
</organism>
<accession>P05108</accession>
<accession>A8K8D5</accession>
<accession>B3KPU8</accession>
<accession>G3XAD7</accession>
<accession>Q15081</accession>
<accession>Q16805</accession>
<accession>Q8N1A7</accession>
<dbReference type="EC" id="1.14.15.6" evidence="10"/>
<dbReference type="EMBL" id="M14565">
    <property type="protein sequence ID" value="AAA52162.1"/>
    <property type="molecule type" value="mRNA"/>
</dbReference>
<dbReference type="EMBL" id="X05367">
    <property type="protein sequence ID" value="CAA28965.1"/>
    <property type="molecule type" value="Genomic_DNA"/>
</dbReference>
<dbReference type="EMBL" id="X05368">
    <property type="protein sequence ID" value="CAA28965.1"/>
    <property type="status" value="JOINED"/>
    <property type="molecule type" value="Genomic_DNA"/>
</dbReference>
<dbReference type="EMBL" id="X05369">
    <property type="protein sequence ID" value="CAA28965.1"/>
    <property type="status" value="JOINED"/>
    <property type="molecule type" value="Genomic_DNA"/>
</dbReference>
<dbReference type="EMBL" id="X05370">
    <property type="protein sequence ID" value="CAA28965.1"/>
    <property type="status" value="JOINED"/>
    <property type="molecule type" value="Genomic_DNA"/>
</dbReference>
<dbReference type="EMBL" id="X05371">
    <property type="protein sequence ID" value="CAA28965.1"/>
    <property type="status" value="JOINED"/>
    <property type="molecule type" value="Genomic_DNA"/>
</dbReference>
<dbReference type="EMBL" id="X05372">
    <property type="protein sequence ID" value="CAA28965.1"/>
    <property type="status" value="JOINED"/>
    <property type="molecule type" value="Genomic_DNA"/>
</dbReference>
<dbReference type="EMBL" id="X05373">
    <property type="protein sequence ID" value="CAA28965.1"/>
    <property type="status" value="JOINED"/>
    <property type="molecule type" value="Genomic_DNA"/>
</dbReference>
<dbReference type="EMBL" id="X05374">
    <property type="protein sequence ID" value="CAA28965.1"/>
    <property type="status" value="JOINED"/>
    <property type="molecule type" value="Genomic_DNA"/>
</dbReference>
<dbReference type="EMBL" id="AK056794">
    <property type="protein sequence ID" value="BAG51810.1"/>
    <property type="molecule type" value="mRNA"/>
</dbReference>
<dbReference type="EMBL" id="AK292300">
    <property type="protein sequence ID" value="BAF84989.1"/>
    <property type="molecule type" value="mRNA"/>
</dbReference>
<dbReference type="EMBL" id="AC090826">
    <property type="status" value="NOT_ANNOTATED_CDS"/>
    <property type="molecule type" value="Genomic_DNA"/>
</dbReference>
<dbReference type="EMBL" id="CH471136">
    <property type="protein sequence ID" value="EAW99341.1"/>
    <property type="molecule type" value="Genomic_DNA"/>
</dbReference>
<dbReference type="EMBL" id="CH471136">
    <property type="protein sequence ID" value="EAW99342.1"/>
    <property type="molecule type" value="Genomic_DNA"/>
</dbReference>
<dbReference type="EMBL" id="BC032329">
    <property type="protein sequence ID" value="AAH32329.1"/>
    <property type="molecule type" value="mRNA"/>
</dbReference>
<dbReference type="EMBL" id="X14257">
    <property type="protein sequence ID" value="CAA32471.1"/>
    <property type="molecule type" value="Genomic_DNA"/>
</dbReference>
<dbReference type="EMBL" id="M28253">
    <property type="protein sequence ID" value="AAA36404.1"/>
    <property type="molecule type" value="mRNA"/>
</dbReference>
<dbReference type="CCDS" id="CCDS32291.1">
    <molecule id="P05108-1"/>
</dbReference>
<dbReference type="CCDS" id="CCDS45303.1">
    <molecule id="P05108-2"/>
</dbReference>
<dbReference type="PIR" id="A25922">
    <property type="entry name" value="A25922"/>
</dbReference>
<dbReference type="RefSeq" id="NP_000772.2">
    <molecule id="P05108-1"/>
    <property type="nucleotide sequence ID" value="NM_000781.3"/>
</dbReference>
<dbReference type="RefSeq" id="NP_001093243.1">
    <molecule id="P05108-2"/>
    <property type="nucleotide sequence ID" value="NM_001099773.2"/>
</dbReference>
<dbReference type="PDB" id="3N9Y">
    <property type="method" value="X-ray"/>
    <property type="resolution" value="2.10 A"/>
    <property type="chains" value="A/B=41-521"/>
</dbReference>
<dbReference type="PDB" id="3N9Z">
    <property type="method" value="X-ray"/>
    <property type="resolution" value="2.17 A"/>
    <property type="chains" value="A/B=41-521"/>
</dbReference>
<dbReference type="PDB" id="3NA0">
    <property type="method" value="X-ray"/>
    <property type="resolution" value="2.50 A"/>
    <property type="chains" value="A/B=44-514"/>
</dbReference>
<dbReference type="PDB" id="3NA1">
    <property type="method" value="X-ray"/>
    <property type="resolution" value="2.25 A"/>
    <property type="chains" value="A/B=41-521"/>
</dbReference>
<dbReference type="PDBsum" id="3N9Y"/>
<dbReference type="PDBsum" id="3N9Z"/>
<dbReference type="PDBsum" id="3NA0"/>
<dbReference type="PDBsum" id="3NA1"/>
<dbReference type="SMR" id="P05108"/>
<dbReference type="BioGRID" id="107955">
    <property type="interactions" value="6"/>
</dbReference>
<dbReference type="CORUM" id="P05108"/>
<dbReference type="FunCoup" id="P05108">
    <property type="interactions" value="634"/>
</dbReference>
<dbReference type="IntAct" id="P05108">
    <property type="interactions" value="5"/>
</dbReference>
<dbReference type="MINT" id="P05108"/>
<dbReference type="STRING" id="9606.ENSP00000268053"/>
<dbReference type="BindingDB" id="P05108"/>
<dbReference type="ChEMBL" id="CHEMBL2033"/>
<dbReference type="DrugBank" id="DB00357">
    <property type="generic name" value="Aminoglutethimide"/>
</dbReference>
<dbReference type="DrugBank" id="DB00169">
    <property type="generic name" value="Cholecalciferol"/>
</dbReference>
<dbReference type="DrugBank" id="DB01396">
    <property type="generic name" value="Digitoxin"/>
</dbReference>
<dbReference type="DrugBank" id="DB00390">
    <property type="generic name" value="Digoxin"/>
</dbReference>
<dbReference type="DrugBank" id="DB00153">
    <property type="generic name" value="Ergocalciferol"/>
</dbReference>
<dbReference type="DrugBank" id="DB01437">
    <property type="generic name" value="Glutethimide"/>
</dbReference>
<dbReference type="DrugBank" id="DB05667">
    <property type="generic name" value="Levoketoconazole"/>
</dbReference>
<dbReference type="DrugBank" id="DB02901">
    <property type="generic name" value="Stanolone"/>
</dbReference>
<dbReference type="DrugBank" id="DB00624">
    <property type="generic name" value="Testosterone"/>
</dbReference>
<dbReference type="DrugBank" id="DB13943">
    <property type="generic name" value="Testosterone cypionate"/>
</dbReference>
<dbReference type="DrugBank" id="DB13944">
    <property type="generic name" value="Testosterone enanthate"/>
</dbReference>
<dbReference type="DrugBank" id="DB13946">
    <property type="generic name" value="Testosterone undecanoate"/>
</dbReference>
<dbReference type="DrugCentral" id="P05108"/>
<dbReference type="GuidetoPHARMACOLOGY" id="1358"/>
<dbReference type="SwissLipids" id="SLP:000001196"/>
<dbReference type="iPTMnet" id="P05108"/>
<dbReference type="PhosphoSitePlus" id="P05108"/>
<dbReference type="BioMuta" id="CYP11A1"/>
<dbReference type="DMDM" id="143811381"/>
<dbReference type="MassIVE" id="P05108"/>
<dbReference type="PaxDb" id="9606-ENSP00000268053"/>
<dbReference type="PeptideAtlas" id="P05108"/>
<dbReference type="ProteomicsDB" id="33720"/>
<dbReference type="ProteomicsDB" id="51794">
    <molecule id="P05108-1"/>
</dbReference>
<dbReference type="Antibodypedia" id="3076">
    <property type="antibodies" value="417 antibodies from 32 providers"/>
</dbReference>
<dbReference type="DNASU" id="1583"/>
<dbReference type="Ensembl" id="ENST00000268053.11">
    <molecule id="P05108-1"/>
    <property type="protein sequence ID" value="ENSP00000268053.6"/>
    <property type="gene ID" value="ENSG00000140459.18"/>
</dbReference>
<dbReference type="Ensembl" id="ENST00000358632.8">
    <molecule id="P05108-2"/>
    <property type="protein sequence ID" value="ENSP00000351455.4"/>
    <property type="gene ID" value="ENSG00000140459.18"/>
</dbReference>
<dbReference type="Ensembl" id="ENST00000672385.1">
    <molecule id="P05108-1"/>
    <property type="protein sequence ID" value="ENSP00000500767.1"/>
    <property type="gene ID" value="ENSG00000288362.1"/>
</dbReference>
<dbReference type="Ensembl" id="ENST00000672913.1">
    <molecule id="P05108-2"/>
    <property type="protein sequence ID" value="ENSP00000499849.1"/>
    <property type="gene ID" value="ENSG00000288362.1"/>
</dbReference>
<dbReference type="GeneID" id="1583"/>
<dbReference type="KEGG" id="hsa:1583"/>
<dbReference type="MANE-Select" id="ENST00000268053.11">
    <property type="protein sequence ID" value="ENSP00000268053.6"/>
    <property type="RefSeq nucleotide sequence ID" value="NM_000781.3"/>
    <property type="RefSeq protein sequence ID" value="NP_000772.2"/>
</dbReference>
<dbReference type="UCSC" id="uc002axs.3">
    <molecule id="P05108-1"/>
    <property type="organism name" value="human"/>
</dbReference>
<dbReference type="AGR" id="HGNC:2590"/>
<dbReference type="CTD" id="1583"/>
<dbReference type="DisGeNET" id="1583"/>
<dbReference type="GeneCards" id="CYP11A1"/>
<dbReference type="HGNC" id="HGNC:2590">
    <property type="gene designation" value="CYP11A1"/>
</dbReference>
<dbReference type="HPA" id="ENSG00000140459">
    <property type="expression patterns" value="Tissue enriched (adrenal)"/>
</dbReference>
<dbReference type="MalaCards" id="CYP11A1"/>
<dbReference type="MIM" id="118485">
    <property type="type" value="gene"/>
</dbReference>
<dbReference type="MIM" id="613743">
    <property type="type" value="phenotype"/>
</dbReference>
<dbReference type="neXtProt" id="NX_P05108"/>
<dbReference type="OpenTargets" id="ENSG00000140459"/>
<dbReference type="Orphanet" id="168558">
    <property type="disease" value="46,XY difference of sex development-adrenal insufficiency due to CYP11A1 deficiency"/>
</dbReference>
<dbReference type="Orphanet" id="289548">
    <property type="disease" value="Inherited isolated adrenal insufficiency due to partial CYP11A1 deficiency"/>
</dbReference>
<dbReference type="PharmGKB" id="PA27089"/>
<dbReference type="VEuPathDB" id="HostDB:ENSG00000140459"/>
<dbReference type="eggNOG" id="KOG0159">
    <property type="taxonomic scope" value="Eukaryota"/>
</dbReference>
<dbReference type="GeneTree" id="ENSGT00940000158575"/>
<dbReference type="HOGENOM" id="CLU_001570_28_4_1"/>
<dbReference type="InParanoid" id="P05108"/>
<dbReference type="OMA" id="QVANYAM"/>
<dbReference type="OrthoDB" id="3945418at2759"/>
<dbReference type="PAN-GO" id="P05108">
    <property type="GO annotations" value="7 GO annotations based on evolutionary models"/>
</dbReference>
<dbReference type="PhylomeDB" id="P05108"/>
<dbReference type="TreeFam" id="TF105094"/>
<dbReference type="BioCyc" id="MetaCyc:HS06719-MONOMER"/>
<dbReference type="BRENDA" id="1.14.15.6">
    <property type="organism ID" value="2681"/>
</dbReference>
<dbReference type="PathwayCommons" id="P05108"/>
<dbReference type="Reactome" id="R-HSA-196108">
    <property type="pathway name" value="Pregnenolone biosynthesis"/>
</dbReference>
<dbReference type="Reactome" id="R-HSA-211976">
    <property type="pathway name" value="Endogenous sterols"/>
</dbReference>
<dbReference type="Reactome" id="R-HSA-5579026">
    <property type="pathway name" value="Defective CYP11A1 causes AICSR"/>
</dbReference>
<dbReference type="SABIO-RK" id="P05108"/>
<dbReference type="SignaLink" id="P05108"/>
<dbReference type="SIGNOR" id="P05108"/>
<dbReference type="UniPathway" id="UPA00229"/>
<dbReference type="UniPathway" id="UPA00296"/>
<dbReference type="BioGRID-ORCS" id="1583">
    <property type="hits" value="18 hits in 1153 CRISPR screens"/>
</dbReference>
<dbReference type="ChiTaRS" id="CYP11A1">
    <property type="organism name" value="human"/>
</dbReference>
<dbReference type="EvolutionaryTrace" id="P05108"/>
<dbReference type="GeneWiki" id="Cholesterol_side-chain_cleavage_enzyme"/>
<dbReference type="GenomeRNAi" id="1583"/>
<dbReference type="Pharos" id="P05108">
    <property type="development level" value="Tclin"/>
</dbReference>
<dbReference type="PRO" id="PR:P05108"/>
<dbReference type="Proteomes" id="UP000005640">
    <property type="component" value="Chromosome 15"/>
</dbReference>
<dbReference type="RNAct" id="P05108">
    <property type="molecule type" value="protein"/>
</dbReference>
<dbReference type="Bgee" id="ENSG00000140459">
    <property type="expression patterns" value="Expressed in adrenal tissue and 99 other cell types or tissues"/>
</dbReference>
<dbReference type="ExpressionAtlas" id="P05108">
    <property type="expression patterns" value="baseline and differential"/>
</dbReference>
<dbReference type="GO" id="GO:0005743">
    <property type="term" value="C:mitochondrial inner membrane"/>
    <property type="evidence" value="ECO:0000250"/>
    <property type="project" value="UniProtKB"/>
</dbReference>
<dbReference type="GO" id="GO:0005759">
    <property type="term" value="C:mitochondrial matrix"/>
    <property type="evidence" value="ECO:0000304"/>
    <property type="project" value="Reactome"/>
</dbReference>
<dbReference type="GO" id="GO:0005739">
    <property type="term" value="C:mitochondrion"/>
    <property type="evidence" value="ECO:0006056"/>
    <property type="project" value="FlyBase"/>
</dbReference>
<dbReference type="GO" id="GO:0008386">
    <property type="term" value="F:cholesterol monooxygenase (side-chain-cleaving) activity"/>
    <property type="evidence" value="ECO:0000314"/>
    <property type="project" value="UniProtKB"/>
</dbReference>
<dbReference type="GO" id="GO:0020037">
    <property type="term" value="F:heme binding"/>
    <property type="evidence" value="ECO:0000314"/>
    <property type="project" value="UniProtKB"/>
</dbReference>
<dbReference type="GO" id="GO:0005506">
    <property type="term" value="F:iron ion binding"/>
    <property type="evidence" value="ECO:0007669"/>
    <property type="project" value="InterPro"/>
</dbReference>
<dbReference type="GO" id="GO:0006700">
    <property type="term" value="P:C21-steroid hormone biosynthetic process"/>
    <property type="evidence" value="ECO:0000314"/>
    <property type="project" value="UniProtKB"/>
</dbReference>
<dbReference type="GO" id="GO:0071375">
    <property type="term" value="P:cellular response to peptide hormone stimulus"/>
    <property type="evidence" value="ECO:0000318"/>
    <property type="project" value="GO_Central"/>
</dbReference>
<dbReference type="GO" id="GO:0008203">
    <property type="term" value="P:cholesterol metabolic process"/>
    <property type="evidence" value="ECO:0000314"/>
    <property type="project" value="UniProtKB"/>
</dbReference>
<dbReference type="GO" id="GO:0034650">
    <property type="term" value="P:cortisol metabolic process"/>
    <property type="evidence" value="ECO:0000318"/>
    <property type="project" value="GO_Central"/>
</dbReference>
<dbReference type="GO" id="GO:0006704">
    <property type="term" value="P:glucocorticoid biosynthetic process"/>
    <property type="evidence" value="ECO:0000318"/>
    <property type="project" value="GO_Central"/>
</dbReference>
<dbReference type="GO" id="GO:0016125">
    <property type="term" value="P:sterol metabolic process"/>
    <property type="evidence" value="ECO:0000304"/>
    <property type="project" value="Reactome"/>
</dbReference>
<dbReference type="GO" id="GO:0042359">
    <property type="term" value="P:vitamin D metabolic process"/>
    <property type="evidence" value="ECO:0000250"/>
    <property type="project" value="UniProtKB"/>
</dbReference>
<dbReference type="CDD" id="cd20643">
    <property type="entry name" value="CYP11A1"/>
    <property type="match status" value="1"/>
</dbReference>
<dbReference type="FunFam" id="1.10.630.10:FF:000015">
    <property type="entry name" value="Cholesterol side-chain cleavage enzyme, mitochondrial"/>
    <property type="match status" value="1"/>
</dbReference>
<dbReference type="Gene3D" id="1.10.630.10">
    <property type="entry name" value="Cytochrome P450"/>
    <property type="match status" value="1"/>
</dbReference>
<dbReference type="InterPro" id="IPR050479">
    <property type="entry name" value="CYP11_CYP27_families"/>
</dbReference>
<dbReference type="InterPro" id="IPR001128">
    <property type="entry name" value="Cyt_P450"/>
</dbReference>
<dbReference type="InterPro" id="IPR017972">
    <property type="entry name" value="Cyt_P450_CS"/>
</dbReference>
<dbReference type="InterPro" id="IPR002401">
    <property type="entry name" value="Cyt_P450_E_grp-I"/>
</dbReference>
<dbReference type="InterPro" id="IPR036396">
    <property type="entry name" value="Cyt_P450_sf"/>
</dbReference>
<dbReference type="PANTHER" id="PTHR24279:SF3">
    <property type="entry name" value="CHOLESTEROL SIDE-CHAIN CLEAVAGE ENZYME, MITOCHONDRIAL"/>
    <property type="match status" value="1"/>
</dbReference>
<dbReference type="PANTHER" id="PTHR24279">
    <property type="entry name" value="CYTOCHROME P450"/>
    <property type="match status" value="1"/>
</dbReference>
<dbReference type="Pfam" id="PF00067">
    <property type="entry name" value="p450"/>
    <property type="match status" value="1"/>
</dbReference>
<dbReference type="PRINTS" id="PR00463">
    <property type="entry name" value="EP450I"/>
</dbReference>
<dbReference type="PRINTS" id="PR00385">
    <property type="entry name" value="P450"/>
</dbReference>
<dbReference type="SUPFAM" id="SSF48264">
    <property type="entry name" value="Cytochrome P450"/>
    <property type="match status" value="1"/>
</dbReference>
<dbReference type="PROSITE" id="PS00086">
    <property type="entry name" value="CYTOCHROME_P450"/>
    <property type="match status" value="1"/>
</dbReference>
<reference key="1">
    <citation type="journal article" date="1986" name="Proc. Natl. Acad. Sci. U.S.A.">
        <title>Human cholesterol side-chain cleavage enzyme, P450scc: cDNA cloning, assignment of the gene to chromosome 15, and expression in the placenta.</title>
        <authorList>
            <person name="Chung B.-C."/>
            <person name="Matteson K.J."/>
            <person name="Voutilainen R."/>
            <person name="Mohandas T.K."/>
            <person name="Miller W.L."/>
        </authorList>
    </citation>
    <scope>NUCLEOTIDE SEQUENCE [MRNA] (ISOFORM 1)</scope>
</reference>
<reference key="2">
    <citation type="journal article" date="1987" name="J. Biochem.">
        <title>Gene structure of human cytochrome P-450(SCC), cholesterol desmolase.</title>
        <authorList>
            <person name="Morohashi K."/>
            <person name="Sogawa K."/>
            <person name="Omura T."/>
            <person name="Fujii-Kuriyama Y."/>
        </authorList>
    </citation>
    <scope>NUCLEOTIDE SEQUENCE [GENOMIC DNA]</scope>
    <source>
        <tissue>Placenta</tissue>
    </source>
</reference>
<reference key="3">
    <citation type="journal article" date="2004" name="Nat. Genet.">
        <title>Complete sequencing and characterization of 21,243 full-length human cDNAs.</title>
        <authorList>
            <person name="Ota T."/>
            <person name="Suzuki Y."/>
            <person name="Nishikawa T."/>
            <person name="Otsuki T."/>
            <person name="Sugiyama T."/>
            <person name="Irie R."/>
            <person name="Wakamatsu A."/>
            <person name="Hayashi K."/>
            <person name="Sato H."/>
            <person name="Nagai K."/>
            <person name="Kimura K."/>
            <person name="Makita H."/>
            <person name="Sekine M."/>
            <person name="Obayashi M."/>
            <person name="Nishi T."/>
            <person name="Shibahara T."/>
            <person name="Tanaka T."/>
            <person name="Ishii S."/>
            <person name="Yamamoto J."/>
            <person name="Saito K."/>
            <person name="Kawai Y."/>
            <person name="Isono Y."/>
            <person name="Nakamura Y."/>
            <person name="Nagahari K."/>
            <person name="Murakami K."/>
            <person name="Yasuda T."/>
            <person name="Iwayanagi T."/>
            <person name="Wagatsuma M."/>
            <person name="Shiratori A."/>
            <person name="Sudo H."/>
            <person name="Hosoiri T."/>
            <person name="Kaku Y."/>
            <person name="Kodaira H."/>
            <person name="Kondo H."/>
            <person name="Sugawara M."/>
            <person name="Takahashi M."/>
            <person name="Kanda K."/>
            <person name="Yokoi T."/>
            <person name="Furuya T."/>
            <person name="Kikkawa E."/>
            <person name="Omura Y."/>
            <person name="Abe K."/>
            <person name="Kamihara K."/>
            <person name="Katsuta N."/>
            <person name="Sato K."/>
            <person name="Tanikawa M."/>
            <person name="Yamazaki M."/>
            <person name="Ninomiya K."/>
            <person name="Ishibashi T."/>
            <person name="Yamashita H."/>
            <person name="Murakawa K."/>
            <person name="Fujimori K."/>
            <person name="Tanai H."/>
            <person name="Kimata M."/>
            <person name="Watanabe M."/>
            <person name="Hiraoka S."/>
            <person name="Chiba Y."/>
            <person name="Ishida S."/>
            <person name="Ono Y."/>
            <person name="Takiguchi S."/>
            <person name="Watanabe S."/>
            <person name="Yosida M."/>
            <person name="Hotuta T."/>
            <person name="Kusano J."/>
            <person name="Kanehori K."/>
            <person name="Takahashi-Fujii A."/>
            <person name="Hara H."/>
            <person name="Tanase T.-O."/>
            <person name="Nomura Y."/>
            <person name="Togiya S."/>
            <person name="Komai F."/>
            <person name="Hara R."/>
            <person name="Takeuchi K."/>
            <person name="Arita M."/>
            <person name="Imose N."/>
            <person name="Musashino K."/>
            <person name="Yuuki H."/>
            <person name="Oshima A."/>
            <person name="Sasaki N."/>
            <person name="Aotsuka S."/>
            <person name="Yoshikawa Y."/>
            <person name="Matsunawa H."/>
            <person name="Ichihara T."/>
            <person name="Shiohata N."/>
            <person name="Sano S."/>
            <person name="Moriya S."/>
            <person name="Momiyama H."/>
            <person name="Satoh N."/>
            <person name="Takami S."/>
            <person name="Terashima Y."/>
            <person name="Suzuki O."/>
            <person name="Nakagawa S."/>
            <person name="Senoh A."/>
            <person name="Mizoguchi H."/>
            <person name="Goto Y."/>
            <person name="Shimizu F."/>
            <person name="Wakebe H."/>
            <person name="Hishigaki H."/>
            <person name="Watanabe T."/>
            <person name="Sugiyama A."/>
            <person name="Takemoto M."/>
            <person name="Kawakami B."/>
            <person name="Yamazaki M."/>
            <person name="Watanabe K."/>
            <person name="Kumagai A."/>
            <person name="Itakura S."/>
            <person name="Fukuzumi Y."/>
            <person name="Fujimori Y."/>
            <person name="Komiyama M."/>
            <person name="Tashiro H."/>
            <person name="Tanigami A."/>
            <person name="Fujiwara T."/>
            <person name="Ono T."/>
            <person name="Yamada K."/>
            <person name="Fujii Y."/>
            <person name="Ozaki K."/>
            <person name="Hirao M."/>
            <person name="Ohmori Y."/>
            <person name="Kawabata A."/>
            <person name="Hikiji T."/>
            <person name="Kobatake N."/>
            <person name="Inagaki H."/>
            <person name="Ikema Y."/>
            <person name="Okamoto S."/>
            <person name="Okitani R."/>
            <person name="Kawakami T."/>
            <person name="Noguchi S."/>
            <person name="Itoh T."/>
            <person name="Shigeta K."/>
            <person name="Senba T."/>
            <person name="Matsumura K."/>
            <person name="Nakajima Y."/>
            <person name="Mizuno T."/>
            <person name="Morinaga M."/>
            <person name="Sasaki M."/>
            <person name="Togashi T."/>
            <person name="Oyama M."/>
            <person name="Hata H."/>
            <person name="Watanabe M."/>
            <person name="Komatsu T."/>
            <person name="Mizushima-Sugano J."/>
            <person name="Satoh T."/>
            <person name="Shirai Y."/>
            <person name="Takahashi Y."/>
            <person name="Nakagawa K."/>
            <person name="Okumura K."/>
            <person name="Nagase T."/>
            <person name="Nomura N."/>
            <person name="Kikuchi H."/>
            <person name="Masuho Y."/>
            <person name="Yamashita R."/>
            <person name="Nakai K."/>
            <person name="Yada T."/>
            <person name="Nakamura Y."/>
            <person name="Ohara O."/>
            <person name="Isogai T."/>
            <person name="Sugano S."/>
        </authorList>
    </citation>
    <scope>NUCLEOTIDE SEQUENCE [LARGE SCALE MRNA] (ISOFORMS 1 AND 2)</scope>
    <source>
        <tissue>Placenta</tissue>
        <tissue>Testis</tissue>
    </source>
</reference>
<reference key="4">
    <citation type="journal article" date="2006" name="Nature">
        <title>Analysis of the DNA sequence and duplication history of human chromosome 15.</title>
        <authorList>
            <person name="Zody M.C."/>
            <person name="Garber M."/>
            <person name="Sharpe T."/>
            <person name="Young S.K."/>
            <person name="Rowen L."/>
            <person name="O'Neill K."/>
            <person name="Whittaker C.A."/>
            <person name="Kamal M."/>
            <person name="Chang J.L."/>
            <person name="Cuomo C.A."/>
            <person name="Dewar K."/>
            <person name="FitzGerald M.G."/>
            <person name="Kodira C.D."/>
            <person name="Madan A."/>
            <person name="Qin S."/>
            <person name="Yang X."/>
            <person name="Abbasi N."/>
            <person name="Abouelleil A."/>
            <person name="Arachchi H.M."/>
            <person name="Baradarani L."/>
            <person name="Birditt B."/>
            <person name="Bloom S."/>
            <person name="Bloom T."/>
            <person name="Borowsky M.L."/>
            <person name="Burke J."/>
            <person name="Butler J."/>
            <person name="Cook A."/>
            <person name="DeArellano K."/>
            <person name="DeCaprio D."/>
            <person name="Dorris L. III"/>
            <person name="Dors M."/>
            <person name="Eichler E.E."/>
            <person name="Engels R."/>
            <person name="Fahey J."/>
            <person name="Fleetwood P."/>
            <person name="Friedman C."/>
            <person name="Gearin G."/>
            <person name="Hall J.L."/>
            <person name="Hensley G."/>
            <person name="Johnson E."/>
            <person name="Jones C."/>
            <person name="Kamat A."/>
            <person name="Kaur A."/>
            <person name="Locke D.P."/>
            <person name="Madan A."/>
            <person name="Munson G."/>
            <person name="Jaffe D.B."/>
            <person name="Lui A."/>
            <person name="Macdonald P."/>
            <person name="Mauceli E."/>
            <person name="Naylor J.W."/>
            <person name="Nesbitt R."/>
            <person name="Nicol R."/>
            <person name="O'Leary S.B."/>
            <person name="Ratcliffe A."/>
            <person name="Rounsley S."/>
            <person name="She X."/>
            <person name="Sneddon K.M.B."/>
            <person name="Stewart S."/>
            <person name="Sougnez C."/>
            <person name="Stone S.M."/>
            <person name="Topham K."/>
            <person name="Vincent D."/>
            <person name="Wang S."/>
            <person name="Zimmer A.R."/>
            <person name="Birren B.W."/>
            <person name="Hood L."/>
            <person name="Lander E.S."/>
            <person name="Nusbaum C."/>
        </authorList>
    </citation>
    <scope>NUCLEOTIDE SEQUENCE [LARGE SCALE GENOMIC DNA]</scope>
</reference>
<reference key="5">
    <citation type="submission" date="2005-09" db="EMBL/GenBank/DDBJ databases">
        <authorList>
            <person name="Mural R.J."/>
            <person name="Istrail S."/>
            <person name="Sutton G.G."/>
            <person name="Florea L."/>
            <person name="Halpern A.L."/>
            <person name="Mobarry C.M."/>
            <person name="Lippert R."/>
            <person name="Walenz B."/>
            <person name="Shatkay H."/>
            <person name="Dew I."/>
            <person name="Miller J.R."/>
            <person name="Flanigan M.J."/>
            <person name="Edwards N.J."/>
            <person name="Bolanos R."/>
            <person name="Fasulo D."/>
            <person name="Halldorsson B.V."/>
            <person name="Hannenhalli S."/>
            <person name="Turner R."/>
            <person name="Yooseph S."/>
            <person name="Lu F."/>
            <person name="Nusskern D.R."/>
            <person name="Shue B.C."/>
            <person name="Zheng X.H."/>
            <person name="Zhong F."/>
            <person name="Delcher A.L."/>
            <person name="Huson D.H."/>
            <person name="Kravitz S.A."/>
            <person name="Mouchard L."/>
            <person name="Reinert K."/>
            <person name="Remington K.A."/>
            <person name="Clark A.G."/>
            <person name="Waterman M.S."/>
            <person name="Eichler E.E."/>
            <person name="Adams M.D."/>
            <person name="Hunkapiller M.W."/>
            <person name="Myers E.W."/>
            <person name="Venter J.C."/>
        </authorList>
    </citation>
    <scope>NUCLEOTIDE SEQUENCE [LARGE SCALE GENOMIC DNA]</scope>
</reference>
<reference key="6">
    <citation type="journal article" date="2004" name="Genome Res.">
        <title>The status, quality, and expansion of the NIH full-length cDNA project: the Mammalian Gene Collection (MGC).</title>
        <authorList>
            <consortium name="The MGC Project Team"/>
        </authorList>
    </citation>
    <scope>NUCLEOTIDE SEQUENCE [LARGE SCALE MRNA] (ISOFORM 1)</scope>
    <source>
        <tissue>Brain</tissue>
    </source>
</reference>
<reference key="7">
    <citation type="submission" date="1989-01" db="EMBL/GenBank/DDBJ databases">
        <authorList>
            <person name="Chung B.-C."/>
        </authorList>
    </citation>
    <scope>NUCLEOTIDE SEQUENCE [GENOMIC DNA] OF 1-89</scope>
</reference>
<reference key="8">
    <citation type="journal article" date="1991" name="Biochem. J.">
        <title>Regulated expression of cytochrome P-450scc (cholesterol-side-chain cleavage enzyme) in cultured cell lines detected by antibody against bacterially expressed human protein.</title>
        <authorList>
            <person name="Hu M.C."/>
            <person name="Guo I.C."/>
            <person name="Lin J.H."/>
            <person name="Chung B.-C."/>
        </authorList>
    </citation>
    <scope>PROTEIN SEQUENCE OF 51-54</scope>
    <scope>INDUCTION</scope>
    <source>
        <tissue>Choriocarcinoma</tissue>
    </source>
</reference>
<reference key="9">
    <citation type="journal article" date="1986" name="Endocrinology">
        <title>Study of cholesterol side-chain cleavage (20,22 desmolase) deficiency causing congenital lipoid adrenal hyperplasia using bovine-sequence P450scc oligodeoxyribonucleotide probes.</title>
        <authorList>
            <person name="Matteson K.J."/>
            <person name="Chung B.-C."/>
            <person name="Urdea M.S."/>
            <person name="Miller W.L."/>
        </authorList>
    </citation>
    <scope>NUCLEOTIDE SEQUENCE [MRNA] OF 283-521 (ISOFORM 1)</scope>
</reference>
<reference key="10">
    <citation type="journal article" date="2011" name="Proc. Natl. Acad. Sci. U.S.A.">
        <title>Structural basis for pregnenolone biosynthesis by the mitochondrial monooxygenase system.</title>
        <authorList>
            <person name="Strushkevich N."/>
            <person name="MacKenzie F."/>
            <person name="Cherkesova T."/>
            <person name="Grabovec I."/>
            <person name="Usanov S."/>
            <person name="Park H.W."/>
        </authorList>
    </citation>
    <scope>X-RAY CRYSTALLOGRAPHY (2.1 ANGSTROMS) OF 41-521 IN COMPLEXES WITH FDX1; HEME AND CHOLESTEROL</scope>
    <scope>FUNCTION</scope>
    <scope>CATALYTIC ACTIVITY</scope>
    <scope>COFACTOR</scope>
    <scope>PATHWAY</scope>
    <scope>INTERACTION WITH FDX1</scope>
</reference>
<reference key="11">
    <citation type="journal article" date="1999" name="Nat. Genet.">
        <title>Characterization of single-nucleotide polymorphisms in coding regions of human genes.</title>
        <authorList>
            <person name="Cargill M."/>
            <person name="Altshuler D."/>
            <person name="Ireland J."/>
            <person name="Sklar P."/>
            <person name="Ardlie K."/>
            <person name="Patil N."/>
            <person name="Shaw N."/>
            <person name="Lane C.R."/>
            <person name="Lim E.P."/>
            <person name="Kalyanaraman N."/>
            <person name="Nemesh J."/>
            <person name="Ziaugra L."/>
            <person name="Friedland L."/>
            <person name="Rolfe A."/>
            <person name="Warrington J."/>
            <person name="Lipshutz R."/>
            <person name="Daley G.Q."/>
            <person name="Lander E.S."/>
        </authorList>
    </citation>
    <scope>VARIANT LYS-314</scope>
</reference>
<reference key="12">
    <citation type="journal article" date="1999" name="Nat. Genet.">
        <authorList>
            <person name="Cargill M."/>
            <person name="Altshuler D."/>
            <person name="Ireland J."/>
            <person name="Sklar P."/>
            <person name="Ardlie K."/>
            <person name="Patil N."/>
            <person name="Shaw N."/>
            <person name="Lane C.R."/>
            <person name="Lim E.P."/>
            <person name="Kalyanaraman N."/>
            <person name="Nemesh J."/>
            <person name="Ziaugra L."/>
            <person name="Friedland L."/>
            <person name="Rolfe A."/>
            <person name="Warrington J."/>
            <person name="Lipshutz R."/>
            <person name="Daley G.Q."/>
            <person name="Lander E.S."/>
        </authorList>
    </citation>
    <scope>ERRATUM OF PUBMED:10391209</scope>
</reference>
<reference key="13">
    <citation type="journal article" date="2001" name="J. Clin. Endocrinol. Metab.">
        <title>Heterozygous mutation in the cholesterol side chain cleavage enzyme (P450scc) gene in a patient with 46,XY sex reversal and adrenal insufficiency.</title>
        <authorList>
            <person name="Tajima T."/>
            <person name="Fujieda K."/>
            <person name="Kouda N."/>
            <person name="Nakae J."/>
            <person name="Miller W.L."/>
        </authorList>
    </citation>
    <scope>VARIANT AICSR GLY-ASP-271 INS</scope>
</reference>
<reference key="14">
    <citation type="journal article" date="2002" name="J. Clin. Endocrinol. Metab.">
        <title>Compound heterozygous mutations in the cholesterol side-chain cleavage enzyme gene (CYP11A) cause congenital adrenal insufficiency in humans.</title>
        <authorList>
            <person name="Katsumata N."/>
            <person name="Ohtake M."/>
            <person name="Hojo T."/>
            <person name="Ogawa E."/>
            <person name="Hara T."/>
            <person name="Sato N."/>
            <person name="Tanaka T."/>
        </authorList>
    </citation>
    <scope>VARIANTS AICSR VAL-189 AND TRP-353</scope>
</reference>
<reference key="15">
    <citation type="journal article" date="2006" name="J. Clin. Endocrinol. Metab.">
        <title>Homozygous mutation of P450 side-chain cleavage enzyme gene (CYP11A1) in 46, XY patient with adrenal insufficiency, complete sex reversal, and agenesis of corpus callosum.</title>
        <authorList>
            <person name="al Kandari H."/>
            <person name="Katsumata N."/>
            <person name="Alexander S."/>
            <person name="Rasoul M.A."/>
        </authorList>
    </citation>
    <scope>VARIANT AICSR VAL-359</scope>
    <scope>CHARACTERIZATION OF VARIANT AICSR VAL-359</scope>
</reference>
<reference key="16">
    <citation type="journal article" date="2008" name="J. Clin. Endocrinol. Metab.">
        <title>Severe combined adrenal and gonadal deficiency caused by novel mutations in the cholesterol side chain cleavage enzyme, P450scc.</title>
        <authorList>
            <person name="Kim C.J."/>
            <person name="Lin L."/>
            <person name="Huang N."/>
            <person name="Quigley C.A."/>
            <person name="Avruskin T.W."/>
            <person name="Achermann J.C."/>
            <person name="Miller W.L."/>
        </authorList>
    </citation>
    <scope>VARIANTS AICSR TRP-141 AND GLU-415</scope>
    <scope>CHARACTERIZATION OF VARIANTS AICSR TRP-141 AND GLU-415</scope>
</reference>
<reference key="17">
    <citation type="journal article" date="2009" name="J. Clin. Endocrinol. Metab.">
        <title>A novel homozygous mutation in CYP11A1 gene is associated with late-onset adrenal insufficiency and hypospadias in a 46,XY patient.</title>
        <authorList>
            <person name="Rubtsov P."/>
            <person name="Karmanov M."/>
            <person name="Sverdlova P."/>
            <person name="Spirin P."/>
            <person name="Tiulpakov A."/>
        </authorList>
    </citation>
    <scope>VARIANT AICSR PRO-222</scope>
    <scope>CHARACTERIZATION OF VARIANT AICSR PRO-222</scope>
</reference>
<sequence>MLAKGLPPRSVLVKGCQTFLSAPREGLGRLRVPTGEGAGISTRSPRPFNEIPSPGDNGWLNLYHFWRETGTHKVHLHHVQNFQKYGPIYREKLGNVESVYVIDPEDVALLFKSEGPNPERFLIPPWVAYHQYYQRPIGVLLKKSAAWKKDRVALNQEVMAPEATKNFLPLLDAVSRDFVSVLHRRIKKAGSGNYSGDISDDLFRFAFESITNVIFGERQGMLEEVVNPEAQRFIDAIYQMFHTSVPMLNLPPDLFRLFRTKTWKDHVAAWDVIFSKADIYTQNFYWELRQKGSVHHDYRGILYRLLGDSKMSFEDIKANVTEMLAGGVDTTSMTLQWHLYEMARNLKVQDMLRAEVLAARHQAQGDMATMLQLVPLLKASIKETLRLHPISVTLQRYLVNDLVLRDYMIPAKTLVQVAIYALGREPTFFFDPENFDPTRWLSKDKNITYFRNLGFGWGVRQCLGRRIAELEMTIFLINMLENFRVEIQHLSDVGTTFNLILMPEKPISFTFWPFNQEATQQ</sequence>
<feature type="transit peptide" description="Mitochondrion" evidence="1">
    <location>
        <begin position="1"/>
        <end position="39"/>
    </location>
</feature>
<feature type="chain" id="PRO_0000003585" description="Cholesterol side-chain cleavage enzyme, mitochondrial">
    <location>
        <begin position="40"/>
        <end position="521"/>
    </location>
</feature>
<feature type="binding site" description="axial binding residue" evidence="10 17 18 19 20">
    <location>
        <position position="462"/>
    </location>
    <ligand>
        <name>heme</name>
        <dbReference type="ChEBI" id="CHEBI:30413"/>
    </ligand>
    <ligandPart>
        <name>Fe</name>
        <dbReference type="ChEBI" id="CHEBI:18248"/>
    </ligandPart>
</feature>
<feature type="splice variant" id="VSP_045695" description="In isoform 2." evidence="11">
    <location>
        <begin position="1"/>
        <end position="158"/>
    </location>
</feature>
<feature type="sequence variant" id="VAR_065241" description="In AICSR; reduced activity; dbSNP:rs121912813." evidence="7">
    <original>L</original>
    <variation>W</variation>
    <location>
        <position position="141"/>
    </location>
</feature>
<feature type="sequence variant" id="VAR_016949" description="In AICSR; no loss of activity; dbSNP:rs121912811." evidence="5">
    <original>A</original>
    <variation>V</variation>
    <location>
        <position position="189"/>
    </location>
</feature>
<feature type="sequence variant" id="VAR_065242" description="In AICSR; markedly reduced activity; dbSNP:rs387906601." evidence="9">
    <original>L</original>
    <variation>P</variation>
    <location>
        <position position="222"/>
    </location>
</feature>
<feature type="sequence variant" id="VAR_016950" description="In AICSR; complete loss of activity." evidence="4">
    <original>D</original>
    <variation>DGD</variation>
    <location>
        <position position="271"/>
    </location>
</feature>
<feature type="sequence variant" id="VAR_013944" description="In dbSNP:rs6161." evidence="3">
    <original>E</original>
    <variation>K</variation>
    <location>
        <position position="314"/>
    </location>
</feature>
<feature type="sequence variant" id="VAR_016951" description="In AICSR; loss of activity; dbSNP:rs72547508." evidence="5">
    <original>R</original>
    <variation>W</variation>
    <location>
        <position position="353"/>
    </location>
</feature>
<feature type="sequence variant" id="VAR_065243" description="In AICSR; markedly reduced activity; dbSNP:rs121912812." evidence="6">
    <original>A</original>
    <variation>V</variation>
    <location>
        <position position="359"/>
    </location>
</feature>
<feature type="sequence variant" id="VAR_065244" description="In AICSR; complete loss of activity; dbSNP:rs121912814." evidence="7">
    <original>V</original>
    <variation>E</variation>
    <location>
        <position position="415"/>
    </location>
</feature>
<feature type="sequence conflict" description="In Ref. 1; AAA52162." evidence="14" ref="1">
    <original>C</original>
    <variation>Y</variation>
    <location>
        <position position="16"/>
    </location>
</feature>
<feature type="sequence conflict" description="In Ref. 2; CAA28965." evidence="14" ref="2">
    <original>F</original>
    <variation>L</variation>
    <location>
        <position position="274"/>
    </location>
</feature>
<feature type="sequence conflict" description="In Ref. 9; AAA36404." evidence="14" ref="9">
    <original>N</original>
    <variation>H</variation>
    <location>
        <position position="283"/>
    </location>
</feature>
<feature type="sequence conflict" description="In Ref. 1; AAA52162 and 9; AAA36404." evidence="14" ref="1 9">
    <original>I</original>
    <variation>M</variation>
    <location>
        <position position="301"/>
    </location>
</feature>
<feature type="sequence conflict" description="In Ref. 3; BAG51810." evidence="14" ref="3">
    <original>K</original>
    <variation>E</variation>
    <location>
        <position position="505"/>
    </location>
</feature>
<feature type="helix" evidence="21">
    <location>
        <begin position="48"/>
        <end position="50"/>
    </location>
</feature>
<feature type="helix" evidence="21">
    <location>
        <begin position="58"/>
        <end position="68"/>
    </location>
</feature>
<feature type="helix" evidence="21">
    <location>
        <begin position="71"/>
        <end position="73"/>
    </location>
</feature>
<feature type="helix" evidence="21">
    <location>
        <begin position="74"/>
        <end position="85"/>
    </location>
</feature>
<feature type="strand" evidence="21">
    <location>
        <begin position="87"/>
        <end position="93"/>
    </location>
</feature>
<feature type="strand" evidence="21">
    <location>
        <begin position="96"/>
        <end position="101"/>
    </location>
</feature>
<feature type="helix" evidence="21">
    <location>
        <begin position="104"/>
        <end position="112"/>
    </location>
</feature>
<feature type="helix" evidence="21">
    <location>
        <begin position="124"/>
        <end position="132"/>
    </location>
</feature>
<feature type="helix" evidence="21">
    <location>
        <begin position="139"/>
        <end position="141"/>
    </location>
</feature>
<feature type="helix" evidence="21">
    <location>
        <begin position="144"/>
        <end position="158"/>
    </location>
</feature>
<feature type="helix" evidence="21">
    <location>
        <begin position="161"/>
        <end position="164"/>
    </location>
</feature>
<feature type="helix" evidence="21">
    <location>
        <begin position="167"/>
        <end position="189"/>
    </location>
</feature>
<feature type="strand" evidence="21">
    <location>
        <begin position="190"/>
        <end position="196"/>
    </location>
</feature>
<feature type="helix" evidence="21">
    <location>
        <begin position="199"/>
        <end position="215"/>
    </location>
</feature>
<feature type="strand" evidence="21">
    <location>
        <begin position="223"/>
        <end position="225"/>
    </location>
</feature>
<feature type="helix" evidence="21">
    <location>
        <begin position="228"/>
        <end position="244"/>
    </location>
</feature>
<feature type="helix" evidence="21">
    <location>
        <begin position="245"/>
        <end position="247"/>
    </location>
</feature>
<feature type="helix" evidence="21">
    <location>
        <begin position="252"/>
        <end position="258"/>
    </location>
</feature>
<feature type="helix" evidence="21">
    <location>
        <begin position="260"/>
        <end position="291"/>
    </location>
</feature>
<feature type="helix" evidence="21">
    <location>
        <begin position="301"/>
        <end position="307"/>
    </location>
</feature>
<feature type="helix" evidence="21">
    <location>
        <begin position="313"/>
        <end position="328"/>
    </location>
</feature>
<feature type="helix" evidence="21">
    <location>
        <begin position="330"/>
        <end position="344"/>
    </location>
</feature>
<feature type="helix" evidence="21">
    <location>
        <begin position="346"/>
        <end position="362"/>
    </location>
</feature>
<feature type="turn" evidence="21">
    <location>
        <begin position="363"/>
        <end position="365"/>
    </location>
</feature>
<feature type="helix" evidence="21">
    <location>
        <begin position="367"/>
        <end position="370"/>
    </location>
</feature>
<feature type="helix" evidence="21">
    <location>
        <begin position="375"/>
        <end position="387"/>
    </location>
</feature>
<feature type="strand" evidence="21">
    <location>
        <begin position="390"/>
        <end position="397"/>
    </location>
</feature>
<feature type="strand" evidence="21">
    <location>
        <begin position="402"/>
        <end position="404"/>
    </location>
</feature>
<feature type="strand" evidence="21">
    <location>
        <begin position="407"/>
        <end position="409"/>
    </location>
</feature>
<feature type="strand" evidence="21">
    <location>
        <begin position="414"/>
        <end position="418"/>
    </location>
</feature>
<feature type="helix" evidence="21">
    <location>
        <begin position="419"/>
        <end position="423"/>
    </location>
</feature>
<feature type="turn" evidence="21">
    <location>
        <begin position="426"/>
        <end position="428"/>
    </location>
</feature>
<feature type="strand" evidence="21">
    <location>
        <begin position="429"/>
        <end position="431"/>
    </location>
</feature>
<feature type="helix" evidence="21">
    <location>
        <begin position="437"/>
        <end position="440"/>
    </location>
</feature>
<feature type="turn" evidence="21">
    <location>
        <begin position="449"/>
        <end position="451"/>
    </location>
</feature>
<feature type="helix" evidence="21">
    <location>
        <begin position="458"/>
        <end position="460"/>
    </location>
</feature>
<feature type="helix" evidence="21">
    <location>
        <begin position="465"/>
        <end position="482"/>
    </location>
</feature>
<feature type="strand" evidence="21">
    <location>
        <begin position="483"/>
        <end position="486"/>
    </location>
</feature>
<feature type="strand" evidence="21">
    <location>
        <begin position="495"/>
        <end position="505"/>
    </location>
</feature>
<feature type="strand" evidence="21">
    <location>
        <begin position="509"/>
        <end position="513"/>
    </location>
</feature>
<evidence type="ECO:0000250" key="1">
    <source>
        <dbReference type="UniProtKB" id="P00189"/>
    </source>
</evidence>
<evidence type="ECO:0000250" key="2">
    <source>
        <dbReference type="UniProtKB" id="P14137"/>
    </source>
</evidence>
<evidence type="ECO:0000269" key="3">
    <source>
    </source>
</evidence>
<evidence type="ECO:0000269" key="4">
    <source>
    </source>
</evidence>
<evidence type="ECO:0000269" key="5">
    <source>
    </source>
</evidence>
<evidence type="ECO:0000269" key="6">
    <source>
    </source>
</evidence>
<evidence type="ECO:0000269" key="7">
    <source>
    </source>
</evidence>
<evidence type="ECO:0000269" key="8">
    <source>
    </source>
</evidence>
<evidence type="ECO:0000269" key="9">
    <source>
    </source>
</evidence>
<evidence type="ECO:0000269" key="10">
    <source>
    </source>
</evidence>
<evidence type="ECO:0000303" key="11">
    <source>
    </source>
</evidence>
<evidence type="ECO:0000303" key="12">
    <source>
    </source>
</evidence>
<evidence type="ECO:0000303" key="13">
    <source>
    </source>
</evidence>
<evidence type="ECO:0000305" key="14"/>
<evidence type="ECO:0000305" key="15">
    <source>
    </source>
</evidence>
<evidence type="ECO:0000312" key="16">
    <source>
        <dbReference type="HGNC" id="HGNC:2590"/>
    </source>
</evidence>
<evidence type="ECO:0007744" key="17">
    <source>
        <dbReference type="PDB" id="3N9Y"/>
    </source>
</evidence>
<evidence type="ECO:0007744" key="18">
    <source>
        <dbReference type="PDB" id="3N9Z"/>
    </source>
</evidence>
<evidence type="ECO:0007744" key="19">
    <source>
        <dbReference type="PDB" id="3NA0"/>
    </source>
</evidence>
<evidence type="ECO:0007744" key="20">
    <source>
        <dbReference type="PDB" id="3NA1"/>
    </source>
</evidence>
<evidence type="ECO:0007829" key="21">
    <source>
        <dbReference type="PDB" id="3N9Y"/>
    </source>
</evidence>
<name>CP11A_HUMAN</name>
<gene>
    <name evidence="12 16" type="primary">CYP11A1</name>
    <name type="synonym">CYP11A</name>
</gene>
<keyword id="KW-0002">3D-structure</keyword>
<keyword id="KW-0025">Alternative splicing</keyword>
<keyword id="KW-0153">Cholesterol metabolism</keyword>
<keyword id="KW-0903">Direct protein sequencing</keyword>
<keyword id="KW-0225">Disease variant</keyword>
<keyword id="KW-0349">Heme</keyword>
<keyword id="KW-0408">Iron</keyword>
<keyword id="KW-0444">Lipid biosynthesis</keyword>
<keyword id="KW-0443">Lipid metabolism</keyword>
<keyword id="KW-0472">Membrane</keyword>
<keyword id="KW-0479">Metal-binding</keyword>
<keyword id="KW-0496">Mitochondrion</keyword>
<keyword id="KW-0999">Mitochondrion inner membrane</keyword>
<keyword id="KW-0503">Monooxygenase</keyword>
<keyword id="KW-0560">Oxidoreductase</keyword>
<keyword id="KW-1267">Proteomics identification</keyword>
<keyword id="KW-1185">Reference proteome</keyword>
<keyword id="KW-0752">Steroid biosynthesis</keyword>
<keyword id="KW-0753">Steroid metabolism</keyword>
<keyword id="KW-0755">Steroidogenesis</keyword>
<keyword id="KW-1207">Sterol metabolism</keyword>
<keyword id="KW-0809">Transit peptide</keyword>